<dbReference type="EC" id="2.4.1.18" evidence="1"/>
<dbReference type="EMBL" id="CP000800">
    <property type="protein sequence ID" value="ABV17243.1"/>
    <property type="molecule type" value="Genomic_DNA"/>
</dbReference>
<dbReference type="RefSeq" id="WP_001283723.1">
    <property type="nucleotide sequence ID" value="NC_009801.1"/>
</dbReference>
<dbReference type="SMR" id="A7ZSW5"/>
<dbReference type="CAZy" id="CBM48">
    <property type="family name" value="Carbohydrate-Binding Module Family 48"/>
</dbReference>
<dbReference type="CAZy" id="GH13">
    <property type="family name" value="Glycoside Hydrolase Family 13"/>
</dbReference>
<dbReference type="GeneID" id="93778557"/>
<dbReference type="KEGG" id="ecw:EcE24377A_3911"/>
<dbReference type="HOGENOM" id="CLU_004245_3_2_6"/>
<dbReference type="UniPathway" id="UPA00164"/>
<dbReference type="EvolutionaryTrace" id="A7ZSW5"/>
<dbReference type="Proteomes" id="UP000001122">
    <property type="component" value="Chromosome"/>
</dbReference>
<dbReference type="GO" id="GO:0005829">
    <property type="term" value="C:cytosol"/>
    <property type="evidence" value="ECO:0007669"/>
    <property type="project" value="TreeGrafter"/>
</dbReference>
<dbReference type="GO" id="GO:0003844">
    <property type="term" value="F:1,4-alpha-glucan branching enzyme activity"/>
    <property type="evidence" value="ECO:0007669"/>
    <property type="project" value="UniProtKB-UniRule"/>
</dbReference>
<dbReference type="GO" id="GO:0043169">
    <property type="term" value="F:cation binding"/>
    <property type="evidence" value="ECO:0007669"/>
    <property type="project" value="InterPro"/>
</dbReference>
<dbReference type="GO" id="GO:0004553">
    <property type="term" value="F:hydrolase activity, hydrolyzing O-glycosyl compounds"/>
    <property type="evidence" value="ECO:0007669"/>
    <property type="project" value="InterPro"/>
</dbReference>
<dbReference type="GO" id="GO:0005978">
    <property type="term" value="P:glycogen biosynthetic process"/>
    <property type="evidence" value="ECO:0007669"/>
    <property type="project" value="UniProtKB-UniRule"/>
</dbReference>
<dbReference type="CDD" id="cd11322">
    <property type="entry name" value="AmyAc_Glg_BE"/>
    <property type="match status" value="1"/>
</dbReference>
<dbReference type="CDD" id="cd02855">
    <property type="entry name" value="E_set_GBE_prok_N"/>
    <property type="match status" value="1"/>
</dbReference>
<dbReference type="FunFam" id="2.60.40.10:FF:000169">
    <property type="entry name" value="1,4-alpha-glucan branching enzyme GlgB"/>
    <property type="match status" value="1"/>
</dbReference>
<dbReference type="FunFam" id="2.60.40.10:FF:000331">
    <property type="entry name" value="1,4-alpha-glucan branching enzyme GlgB"/>
    <property type="match status" value="1"/>
</dbReference>
<dbReference type="FunFam" id="2.60.40.1180:FF:000002">
    <property type="entry name" value="1,4-alpha-glucan branching enzyme GlgB"/>
    <property type="match status" value="1"/>
</dbReference>
<dbReference type="FunFam" id="3.20.20.80:FF:000003">
    <property type="entry name" value="1,4-alpha-glucan branching enzyme GlgB"/>
    <property type="match status" value="1"/>
</dbReference>
<dbReference type="Gene3D" id="3.20.20.80">
    <property type="entry name" value="Glycosidases"/>
    <property type="match status" value="1"/>
</dbReference>
<dbReference type="Gene3D" id="2.60.40.1180">
    <property type="entry name" value="Golgi alpha-mannosidase II"/>
    <property type="match status" value="1"/>
</dbReference>
<dbReference type="Gene3D" id="2.60.40.10">
    <property type="entry name" value="Immunoglobulins"/>
    <property type="match status" value="2"/>
</dbReference>
<dbReference type="HAMAP" id="MF_00685">
    <property type="entry name" value="GlgB"/>
    <property type="match status" value="1"/>
</dbReference>
<dbReference type="InterPro" id="IPR006048">
    <property type="entry name" value="A-amylase/branching_C"/>
</dbReference>
<dbReference type="InterPro" id="IPR037439">
    <property type="entry name" value="Branching_enzy"/>
</dbReference>
<dbReference type="InterPro" id="IPR006407">
    <property type="entry name" value="GlgB"/>
</dbReference>
<dbReference type="InterPro" id="IPR054169">
    <property type="entry name" value="GlgB_N"/>
</dbReference>
<dbReference type="InterPro" id="IPR044143">
    <property type="entry name" value="GlgB_N_E_set_prok"/>
</dbReference>
<dbReference type="InterPro" id="IPR006047">
    <property type="entry name" value="Glyco_hydro_13_cat_dom"/>
</dbReference>
<dbReference type="InterPro" id="IPR004193">
    <property type="entry name" value="Glyco_hydro_13_N"/>
</dbReference>
<dbReference type="InterPro" id="IPR013780">
    <property type="entry name" value="Glyco_hydro_b"/>
</dbReference>
<dbReference type="InterPro" id="IPR017853">
    <property type="entry name" value="Glycoside_hydrolase_SF"/>
</dbReference>
<dbReference type="InterPro" id="IPR013783">
    <property type="entry name" value="Ig-like_fold"/>
</dbReference>
<dbReference type="InterPro" id="IPR014756">
    <property type="entry name" value="Ig_E-set"/>
</dbReference>
<dbReference type="NCBIfam" id="TIGR01515">
    <property type="entry name" value="branching_enzym"/>
    <property type="match status" value="1"/>
</dbReference>
<dbReference type="NCBIfam" id="NF003811">
    <property type="entry name" value="PRK05402.1"/>
    <property type="match status" value="1"/>
</dbReference>
<dbReference type="NCBIfam" id="NF008967">
    <property type="entry name" value="PRK12313.1"/>
    <property type="match status" value="1"/>
</dbReference>
<dbReference type="PANTHER" id="PTHR43651">
    <property type="entry name" value="1,4-ALPHA-GLUCAN-BRANCHING ENZYME"/>
    <property type="match status" value="1"/>
</dbReference>
<dbReference type="PANTHER" id="PTHR43651:SF3">
    <property type="entry name" value="1,4-ALPHA-GLUCAN-BRANCHING ENZYME"/>
    <property type="match status" value="1"/>
</dbReference>
<dbReference type="Pfam" id="PF00128">
    <property type="entry name" value="Alpha-amylase"/>
    <property type="match status" value="1"/>
</dbReference>
<dbReference type="Pfam" id="PF02806">
    <property type="entry name" value="Alpha-amylase_C"/>
    <property type="match status" value="1"/>
</dbReference>
<dbReference type="Pfam" id="PF02922">
    <property type="entry name" value="CBM_48"/>
    <property type="match status" value="1"/>
</dbReference>
<dbReference type="Pfam" id="PF22019">
    <property type="entry name" value="GlgB_N"/>
    <property type="match status" value="1"/>
</dbReference>
<dbReference type="PIRSF" id="PIRSF000463">
    <property type="entry name" value="GlgB"/>
    <property type="match status" value="1"/>
</dbReference>
<dbReference type="SMART" id="SM00642">
    <property type="entry name" value="Aamy"/>
    <property type="match status" value="1"/>
</dbReference>
<dbReference type="SUPFAM" id="SSF51445">
    <property type="entry name" value="(Trans)glycosidases"/>
    <property type="match status" value="1"/>
</dbReference>
<dbReference type="SUPFAM" id="SSF81296">
    <property type="entry name" value="E set domains"/>
    <property type="match status" value="2"/>
</dbReference>
<dbReference type="SUPFAM" id="SSF51011">
    <property type="entry name" value="Glycosyl hydrolase domain"/>
    <property type="match status" value="1"/>
</dbReference>
<accession>A7ZSW5</accession>
<comment type="function">
    <text evidence="1">Catalyzes the formation of the alpha-1,6-glucosidic linkages in glycogen by scission of a 1,4-alpha-linked oligosaccharide from growing alpha-1,4-glucan chains and the subsequent attachment of the oligosaccharide to the alpha-1,6 position.</text>
</comment>
<comment type="catalytic activity">
    <reaction evidence="1">
        <text>Transfers a segment of a (1-&gt;4)-alpha-D-glucan chain to a primary hydroxy group in a similar glucan chain.</text>
        <dbReference type="EC" id="2.4.1.18"/>
    </reaction>
</comment>
<comment type="pathway">
    <text evidence="1">Glycan biosynthesis; glycogen biosynthesis.</text>
</comment>
<comment type="subunit">
    <text evidence="1">Monomer.</text>
</comment>
<comment type="similarity">
    <text evidence="1">Belongs to the glycosyl hydrolase 13 family. GlgB subfamily.</text>
</comment>
<evidence type="ECO:0000255" key="1">
    <source>
        <dbReference type="HAMAP-Rule" id="MF_00685"/>
    </source>
</evidence>
<organism>
    <name type="scientific">Escherichia coli O139:H28 (strain E24377A / ETEC)</name>
    <dbReference type="NCBI Taxonomy" id="331111"/>
    <lineage>
        <taxon>Bacteria</taxon>
        <taxon>Pseudomonadati</taxon>
        <taxon>Pseudomonadota</taxon>
        <taxon>Gammaproteobacteria</taxon>
        <taxon>Enterobacterales</taxon>
        <taxon>Enterobacteriaceae</taxon>
        <taxon>Escherichia</taxon>
    </lineage>
</organism>
<gene>
    <name evidence="1" type="primary">glgB</name>
    <name type="ordered locus">EcE24377A_3911</name>
</gene>
<sequence>MSDRIDRDVINALIAGHFADPFSVLGMHKTTAGLEVRALLPDATDVWVIEPKTGRKLAKLECLDSRGFFSGVIPRRKNFFRYQLAVVWHGQQNLIDDPYRFGPLIQEMDAWLLSEGTHLRPYETLGAHADTMDGVTGTRFSVWAPNARRVSVVGQFNYWDGRRHPMRLRKESGIWELFIPGAHNGQLYKYEMIDANGNLRLKSDPYAFEAQMRPETASLICGLPEKVVQTEERKKANQFDAPISIYEVHLGSWRRHTDNNFWLSYRELADQLVPYAKWMGFTHLELLPINEHPFDGSWGYQPTGLYAPTRRFGTRDDFRYFIDAAHAAGLNVILDWVPGHFPTDDFALAEFDGTNLYEHSDPREGYHQDWNTLIYNYGRREVSNFLVGNALYWIERFGIDALRVDAVASMIYRDYSRKEGEWIPNEFGGRENLEAIEFLRNTNRILGEQVSGAVTMAEESTDFPGVSRPQDMGGLGFWYKWNLGWMHDTLDYMKLDPVYRQYHHDKLTFGILYNYTENFVLPLSHDEVVHGKKSILDRMPGDAWQKFANLRAYYGWMWAFPGKKLLFMGNEFAQGREWNHDASLDWHLLEGGDNWHHGVQRLVRDLNLTYRHHKAMHELDFDPYGFEWLVVDDKERSVLIFVRRDKEGNEIIVASNFTPVPRHDYRFGINQPGKWREILNTDSMHYHGSNAGNGGTVHSDEIASHGRQHSLSLTLPPLATIWLVREAE</sequence>
<proteinExistence type="inferred from homology"/>
<feature type="chain" id="PRO_1000061989" description="1,4-alpha-glucan branching enzyme GlgB">
    <location>
        <begin position="1"/>
        <end position="728"/>
    </location>
</feature>
<feature type="active site" description="Nucleophile" evidence="1">
    <location>
        <position position="405"/>
    </location>
</feature>
<feature type="active site" description="Proton donor" evidence="1">
    <location>
        <position position="458"/>
    </location>
</feature>
<name>GLGB_ECO24</name>
<keyword id="KW-0119">Carbohydrate metabolism</keyword>
<keyword id="KW-0320">Glycogen biosynthesis</keyword>
<keyword id="KW-0321">Glycogen metabolism</keyword>
<keyword id="KW-0328">Glycosyltransferase</keyword>
<keyword id="KW-1185">Reference proteome</keyword>
<keyword id="KW-0808">Transferase</keyword>
<protein>
    <recommendedName>
        <fullName evidence="1">1,4-alpha-glucan branching enzyme GlgB</fullName>
        <ecNumber evidence="1">2.4.1.18</ecNumber>
    </recommendedName>
    <alternativeName>
        <fullName evidence="1">1,4-alpha-D-glucan:1,4-alpha-D-glucan 6-glucosyl-transferase</fullName>
    </alternativeName>
    <alternativeName>
        <fullName evidence="1">Alpha-(1-&gt;4)-glucan branching enzyme</fullName>
    </alternativeName>
    <alternativeName>
        <fullName evidence="1">Glycogen branching enzyme</fullName>
        <shortName evidence="1">BE</shortName>
    </alternativeName>
</protein>
<reference key="1">
    <citation type="journal article" date="2008" name="J. Bacteriol.">
        <title>The pangenome structure of Escherichia coli: comparative genomic analysis of E. coli commensal and pathogenic isolates.</title>
        <authorList>
            <person name="Rasko D.A."/>
            <person name="Rosovitz M.J."/>
            <person name="Myers G.S.A."/>
            <person name="Mongodin E.F."/>
            <person name="Fricke W.F."/>
            <person name="Gajer P."/>
            <person name="Crabtree J."/>
            <person name="Sebaihia M."/>
            <person name="Thomson N.R."/>
            <person name="Chaudhuri R."/>
            <person name="Henderson I.R."/>
            <person name="Sperandio V."/>
            <person name="Ravel J."/>
        </authorList>
    </citation>
    <scope>NUCLEOTIDE SEQUENCE [LARGE SCALE GENOMIC DNA]</scope>
    <source>
        <strain>E24377A / ETEC</strain>
    </source>
</reference>